<accession>Q87A85</accession>
<name>RL9_XYLFT</name>
<proteinExistence type="inferred from homology"/>
<evidence type="ECO:0000255" key="1">
    <source>
        <dbReference type="HAMAP-Rule" id="MF_00503"/>
    </source>
</evidence>
<evidence type="ECO:0000305" key="2"/>
<gene>
    <name evidence="1" type="primary">rplI</name>
    <name type="ordered locus">PD_1943</name>
</gene>
<organism>
    <name type="scientific">Xylella fastidiosa (strain Temecula1 / ATCC 700964)</name>
    <dbReference type="NCBI Taxonomy" id="183190"/>
    <lineage>
        <taxon>Bacteria</taxon>
        <taxon>Pseudomonadati</taxon>
        <taxon>Pseudomonadota</taxon>
        <taxon>Gammaproteobacteria</taxon>
        <taxon>Lysobacterales</taxon>
        <taxon>Lysobacteraceae</taxon>
        <taxon>Xylella</taxon>
    </lineage>
</organism>
<reference key="1">
    <citation type="journal article" date="2003" name="J. Bacteriol.">
        <title>Comparative analyses of the complete genome sequences of Pierce's disease and citrus variegated chlorosis strains of Xylella fastidiosa.</title>
        <authorList>
            <person name="Van Sluys M.A."/>
            <person name="de Oliveira M.C."/>
            <person name="Monteiro-Vitorello C.B."/>
            <person name="Miyaki C.Y."/>
            <person name="Furlan L.R."/>
            <person name="Camargo L.E.A."/>
            <person name="da Silva A.C.R."/>
            <person name="Moon D.H."/>
            <person name="Takita M.A."/>
            <person name="Lemos E.G.M."/>
            <person name="Machado M.A."/>
            <person name="Ferro M.I.T."/>
            <person name="da Silva F.R."/>
            <person name="Goldman M.H.S."/>
            <person name="Goldman G.H."/>
            <person name="Lemos M.V.F."/>
            <person name="El-Dorry H."/>
            <person name="Tsai S.M."/>
            <person name="Carrer H."/>
            <person name="Carraro D.M."/>
            <person name="de Oliveira R.C."/>
            <person name="Nunes L.R."/>
            <person name="Siqueira W.J."/>
            <person name="Coutinho L.L."/>
            <person name="Kimura E.T."/>
            <person name="Ferro E.S."/>
            <person name="Harakava R."/>
            <person name="Kuramae E.E."/>
            <person name="Marino C.L."/>
            <person name="Giglioti E."/>
            <person name="Abreu I.L."/>
            <person name="Alves L.M.C."/>
            <person name="do Amaral A.M."/>
            <person name="Baia G.S."/>
            <person name="Blanco S.R."/>
            <person name="Brito M.S."/>
            <person name="Cannavan F.S."/>
            <person name="Celestino A.V."/>
            <person name="da Cunha A.F."/>
            <person name="Fenille R.C."/>
            <person name="Ferro J.A."/>
            <person name="Formighieri E.F."/>
            <person name="Kishi L.T."/>
            <person name="Leoni S.G."/>
            <person name="Oliveira A.R."/>
            <person name="Rosa V.E. Jr."/>
            <person name="Sassaki F.T."/>
            <person name="Sena J.A.D."/>
            <person name="de Souza A.A."/>
            <person name="Truffi D."/>
            <person name="Tsukumo F."/>
            <person name="Yanai G.M."/>
            <person name="Zaros L.G."/>
            <person name="Civerolo E.L."/>
            <person name="Simpson A.J.G."/>
            <person name="Almeida N.F. Jr."/>
            <person name="Setubal J.C."/>
            <person name="Kitajima J.P."/>
        </authorList>
    </citation>
    <scope>NUCLEOTIDE SEQUENCE [LARGE SCALE GENOMIC DNA]</scope>
    <source>
        <strain>Temecula1 / ATCC 700964</strain>
    </source>
</reference>
<feature type="chain" id="PRO_0000176709" description="Large ribosomal subunit protein bL9">
    <location>
        <begin position="1"/>
        <end position="149"/>
    </location>
</feature>
<dbReference type="EMBL" id="AE009442">
    <property type="protein sequence ID" value="AAO29773.1"/>
    <property type="molecule type" value="Genomic_DNA"/>
</dbReference>
<dbReference type="RefSeq" id="WP_004084632.1">
    <property type="nucleotide sequence ID" value="NC_004556.1"/>
</dbReference>
<dbReference type="SMR" id="Q87A85"/>
<dbReference type="GeneID" id="93905804"/>
<dbReference type="KEGG" id="xft:PD_1943"/>
<dbReference type="HOGENOM" id="CLU_078938_4_1_6"/>
<dbReference type="Proteomes" id="UP000002516">
    <property type="component" value="Chromosome"/>
</dbReference>
<dbReference type="GO" id="GO:1990904">
    <property type="term" value="C:ribonucleoprotein complex"/>
    <property type="evidence" value="ECO:0007669"/>
    <property type="project" value="UniProtKB-KW"/>
</dbReference>
<dbReference type="GO" id="GO:0005840">
    <property type="term" value="C:ribosome"/>
    <property type="evidence" value="ECO:0007669"/>
    <property type="project" value="UniProtKB-KW"/>
</dbReference>
<dbReference type="GO" id="GO:0019843">
    <property type="term" value="F:rRNA binding"/>
    <property type="evidence" value="ECO:0007669"/>
    <property type="project" value="UniProtKB-UniRule"/>
</dbReference>
<dbReference type="GO" id="GO:0003735">
    <property type="term" value="F:structural constituent of ribosome"/>
    <property type="evidence" value="ECO:0007669"/>
    <property type="project" value="InterPro"/>
</dbReference>
<dbReference type="GO" id="GO:0006412">
    <property type="term" value="P:translation"/>
    <property type="evidence" value="ECO:0007669"/>
    <property type="project" value="UniProtKB-UniRule"/>
</dbReference>
<dbReference type="Gene3D" id="3.10.430.100">
    <property type="entry name" value="Ribosomal protein L9, C-terminal domain"/>
    <property type="match status" value="1"/>
</dbReference>
<dbReference type="Gene3D" id="3.40.5.10">
    <property type="entry name" value="Ribosomal protein L9, N-terminal domain"/>
    <property type="match status" value="1"/>
</dbReference>
<dbReference type="HAMAP" id="MF_00503">
    <property type="entry name" value="Ribosomal_bL9"/>
    <property type="match status" value="1"/>
</dbReference>
<dbReference type="InterPro" id="IPR000244">
    <property type="entry name" value="Ribosomal_bL9"/>
</dbReference>
<dbReference type="InterPro" id="IPR009027">
    <property type="entry name" value="Ribosomal_bL9/RNase_H1_N"/>
</dbReference>
<dbReference type="InterPro" id="IPR020594">
    <property type="entry name" value="Ribosomal_bL9_bac/chp"/>
</dbReference>
<dbReference type="InterPro" id="IPR020069">
    <property type="entry name" value="Ribosomal_bL9_C"/>
</dbReference>
<dbReference type="InterPro" id="IPR036791">
    <property type="entry name" value="Ribosomal_bL9_C_sf"/>
</dbReference>
<dbReference type="InterPro" id="IPR020070">
    <property type="entry name" value="Ribosomal_bL9_N"/>
</dbReference>
<dbReference type="InterPro" id="IPR036935">
    <property type="entry name" value="Ribosomal_bL9_N_sf"/>
</dbReference>
<dbReference type="NCBIfam" id="TIGR00158">
    <property type="entry name" value="L9"/>
    <property type="match status" value="1"/>
</dbReference>
<dbReference type="PANTHER" id="PTHR21368">
    <property type="entry name" value="50S RIBOSOMAL PROTEIN L9"/>
    <property type="match status" value="1"/>
</dbReference>
<dbReference type="Pfam" id="PF03948">
    <property type="entry name" value="Ribosomal_L9_C"/>
    <property type="match status" value="1"/>
</dbReference>
<dbReference type="Pfam" id="PF01281">
    <property type="entry name" value="Ribosomal_L9_N"/>
    <property type="match status" value="1"/>
</dbReference>
<dbReference type="SUPFAM" id="SSF55658">
    <property type="entry name" value="L9 N-domain-like"/>
    <property type="match status" value="1"/>
</dbReference>
<dbReference type="SUPFAM" id="SSF55653">
    <property type="entry name" value="Ribosomal protein L9 C-domain"/>
    <property type="match status" value="1"/>
</dbReference>
<dbReference type="PROSITE" id="PS00651">
    <property type="entry name" value="RIBOSOMAL_L9"/>
    <property type="match status" value="1"/>
</dbReference>
<keyword id="KW-1185">Reference proteome</keyword>
<keyword id="KW-0687">Ribonucleoprotein</keyword>
<keyword id="KW-0689">Ribosomal protein</keyword>
<keyword id="KW-0694">RNA-binding</keyword>
<keyword id="KW-0699">rRNA-binding</keyword>
<comment type="function">
    <text evidence="1">Binds to the 23S rRNA.</text>
</comment>
<comment type="similarity">
    <text evidence="1">Belongs to the bacterial ribosomal protein bL9 family.</text>
</comment>
<protein>
    <recommendedName>
        <fullName evidence="1">Large ribosomal subunit protein bL9</fullName>
    </recommendedName>
    <alternativeName>
        <fullName evidence="2">50S ribosomal protein L9</fullName>
    </alternativeName>
</protein>
<sequence length="149" mass="15686">MELILLQKVANLGALGDKVTVKPGYGRNFLLPNGVAVPATEANLAAFQAKRAEYEAKAKSELDQAQARAAKFEGASVTVSAHASTEGKLYGSVGARDIAEAFTAVGLPLEKKEVILGEGAFRLIGEYDVLLHLHADVESTVKVIVQGVP</sequence>